<comment type="function">
    <text evidence="1">Non-canonical ABC transporter that contains transmembrane domains (TMD), which form a pore in the inner membrane, and an ATP-binding domain (NBD), which is responsible for energy generation. Confers resistance against macrolides.</text>
</comment>
<comment type="subunit">
    <text evidence="1">Homodimer.</text>
</comment>
<comment type="subcellular location">
    <subcellularLocation>
        <location evidence="1">Cell inner membrane</location>
        <topology evidence="1">Multi-pass membrane protein</topology>
    </subcellularLocation>
</comment>
<comment type="similarity">
    <text evidence="1">Belongs to the ABC transporter superfamily. Macrolide exporter (TC 3.A.1.122) family.</text>
</comment>
<evidence type="ECO:0000255" key="1">
    <source>
        <dbReference type="HAMAP-Rule" id="MF_01720"/>
    </source>
</evidence>
<organism>
    <name type="scientific">Wolinella succinogenes (strain ATCC 29543 / DSM 1740 / CCUG 13145 / JCM 31913 / LMG 7466 / NCTC 11488 / FDC 602W)</name>
    <name type="common">Vibrio succinogenes</name>
    <dbReference type="NCBI Taxonomy" id="273121"/>
    <lineage>
        <taxon>Bacteria</taxon>
        <taxon>Pseudomonadati</taxon>
        <taxon>Campylobacterota</taxon>
        <taxon>Epsilonproteobacteria</taxon>
        <taxon>Campylobacterales</taxon>
        <taxon>Helicobacteraceae</taxon>
        <taxon>Wolinella</taxon>
    </lineage>
</organism>
<accession>Q7M8U0</accession>
<reference key="1">
    <citation type="journal article" date="2003" name="Proc. Natl. Acad. Sci. U.S.A.">
        <title>Complete genome sequence and analysis of Wolinella succinogenes.</title>
        <authorList>
            <person name="Baar C."/>
            <person name="Eppinger M."/>
            <person name="Raddatz G."/>
            <person name="Simon J."/>
            <person name="Lanz C."/>
            <person name="Klimmek O."/>
            <person name="Nandakumar R."/>
            <person name="Gross R."/>
            <person name="Rosinus A."/>
            <person name="Keller H."/>
            <person name="Jagtap P."/>
            <person name="Linke B."/>
            <person name="Meyer F."/>
            <person name="Lederer H."/>
            <person name="Schuster S.C."/>
        </authorList>
    </citation>
    <scope>NUCLEOTIDE SEQUENCE [LARGE SCALE GENOMIC DNA]</scope>
    <source>
        <strain>ATCC 29543 / DSM 1740 / CCUG 13145 / JCM 31913 / LMG 7466 / NCTC 11488 / FDC 602W</strain>
    </source>
</reference>
<protein>
    <recommendedName>
        <fullName evidence="1">Macrolide export ATP-binding/permease protein MacB</fullName>
        <ecNumber evidence="1">7.6.2.-</ecNumber>
    </recommendedName>
</protein>
<name>MACB_WOLSU</name>
<proteinExistence type="inferred from homology"/>
<gene>
    <name evidence="1" type="primary">macB</name>
    <name type="ordered locus">WS1418</name>
</gene>
<keyword id="KW-0046">Antibiotic resistance</keyword>
<keyword id="KW-0067">ATP-binding</keyword>
<keyword id="KW-0997">Cell inner membrane</keyword>
<keyword id="KW-1003">Cell membrane</keyword>
<keyword id="KW-0472">Membrane</keyword>
<keyword id="KW-0547">Nucleotide-binding</keyword>
<keyword id="KW-1185">Reference proteome</keyword>
<keyword id="KW-1278">Translocase</keyword>
<keyword id="KW-0812">Transmembrane</keyword>
<keyword id="KW-1133">Transmembrane helix</keyword>
<keyword id="KW-0813">Transport</keyword>
<feature type="chain" id="PRO_0000269985" description="Macrolide export ATP-binding/permease protein MacB">
    <location>
        <begin position="1"/>
        <end position="643"/>
    </location>
</feature>
<feature type="transmembrane region" description="Helical" evidence="1">
    <location>
        <begin position="270"/>
        <end position="290"/>
    </location>
</feature>
<feature type="transmembrane region" description="Helical" evidence="1">
    <location>
        <begin position="518"/>
        <end position="538"/>
    </location>
</feature>
<feature type="transmembrane region" description="Helical" evidence="1">
    <location>
        <begin position="569"/>
        <end position="589"/>
    </location>
</feature>
<feature type="transmembrane region" description="Helical" evidence="1">
    <location>
        <begin position="606"/>
        <end position="626"/>
    </location>
</feature>
<feature type="domain" description="ABC transporter" evidence="1">
    <location>
        <begin position="6"/>
        <end position="244"/>
    </location>
</feature>
<feature type="binding site" evidence="1">
    <location>
        <begin position="42"/>
        <end position="49"/>
    </location>
    <ligand>
        <name>ATP</name>
        <dbReference type="ChEBI" id="CHEBI:30616"/>
    </ligand>
</feature>
<dbReference type="EC" id="7.6.2.-" evidence="1"/>
<dbReference type="EMBL" id="BX571660">
    <property type="protein sequence ID" value="CAE10481.1"/>
    <property type="molecule type" value="Genomic_DNA"/>
</dbReference>
<dbReference type="RefSeq" id="WP_011139266.1">
    <property type="nucleotide sequence ID" value="NC_005090.1"/>
</dbReference>
<dbReference type="SMR" id="Q7M8U0"/>
<dbReference type="STRING" id="273121.WS1418"/>
<dbReference type="KEGG" id="wsu:WS1418"/>
<dbReference type="eggNOG" id="COG0577">
    <property type="taxonomic scope" value="Bacteria"/>
</dbReference>
<dbReference type="eggNOG" id="COG1136">
    <property type="taxonomic scope" value="Bacteria"/>
</dbReference>
<dbReference type="HOGENOM" id="CLU_000604_78_2_7"/>
<dbReference type="Proteomes" id="UP000000422">
    <property type="component" value="Chromosome"/>
</dbReference>
<dbReference type="GO" id="GO:0005886">
    <property type="term" value="C:plasma membrane"/>
    <property type="evidence" value="ECO:0007669"/>
    <property type="project" value="UniProtKB-SubCell"/>
</dbReference>
<dbReference type="GO" id="GO:0005524">
    <property type="term" value="F:ATP binding"/>
    <property type="evidence" value="ECO:0007669"/>
    <property type="project" value="UniProtKB-KW"/>
</dbReference>
<dbReference type="GO" id="GO:0016887">
    <property type="term" value="F:ATP hydrolysis activity"/>
    <property type="evidence" value="ECO:0007669"/>
    <property type="project" value="InterPro"/>
</dbReference>
<dbReference type="GO" id="GO:0022857">
    <property type="term" value="F:transmembrane transporter activity"/>
    <property type="evidence" value="ECO:0007669"/>
    <property type="project" value="TreeGrafter"/>
</dbReference>
<dbReference type="GO" id="GO:0046677">
    <property type="term" value="P:response to antibiotic"/>
    <property type="evidence" value="ECO:0007669"/>
    <property type="project" value="UniProtKB-KW"/>
</dbReference>
<dbReference type="CDD" id="cd03255">
    <property type="entry name" value="ABC_MJ0796_LolCDE_FtsE"/>
    <property type="match status" value="1"/>
</dbReference>
<dbReference type="FunFam" id="3.40.50.300:FF:000032">
    <property type="entry name" value="Export ABC transporter ATP-binding protein"/>
    <property type="match status" value="1"/>
</dbReference>
<dbReference type="Gene3D" id="3.40.50.300">
    <property type="entry name" value="P-loop containing nucleotide triphosphate hydrolases"/>
    <property type="match status" value="1"/>
</dbReference>
<dbReference type="InterPro" id="IPR003593">
    <property type="entry name" value="AAA+_ATPase"/>
</dbReference>
<dbReference type="InterPro" id="IPR003838">
    <property type="entry name" value="ABC3_permease_C"/>
</dbReference>
<dbReference type="InterPro" id="IPR003439">
    <property type="entry name" value="ABC_transporter-like_ATP-bd"/>
</dbReference>
<dbReference type="InterPro" id="IPR017871">
    <property type="entry name" value="ABC_transporter-like_CS"/>
</dbReference>
<dbReference type="InterPro" id="IPR017911">
    <property type="entry name" value="MacB-like_ATP-bd"/>
</dbReference>
<dbReference type="InterPro" id="IPR025857">
    <property type="entry name" value="MacB_PCD"/>
</dbReference>
<dbReference type="InterPro" id="IPR050250">
    <property type="entry name" value="Macrolide_Exporter_MacB"/>
</dbReference>
<dbReference type="InterPro" id="IPR027417">
    <property type="entry name" value="P-loop_NTPase"/>
</dbReference>
<dbReference type="PANTHER" id="PTHR30572:SF14">
    <property type="entry name" value="MACROLIDE EXPORT ATP-BINDING_PERMEASE PROTEIN MACB"/>
    <property type="match status" value="1"/>
</dbReference>
<dbReference type="PANTHER" id="PTHR30572">
    <property type="entry name" value="MEMBRANE COMPONENT OF TRANSPORTER-RELATED"/>
    <property type="match status" value="1"/>
</dbReference>
<dbReference type="Pfam" id="PF00005">
    <property type="entry name" value="ABC_tran"/>
    <property type="match status" value="1"/>
</dbReference>
<dbReference type="Pfam" id="PF02687">
    <property type="entry name" value="FtsX"/>
    <property type="match status" value="1"/>
</dbReference>
<dbReference type="Pfam" id="PF12704">
    <property type="entry name" value="MacB_PCD"/>
    <property type="match status" value="1"/>
</dbReference>
<dbReference type="SMART" id="SM00382">
    <property type="entry name" value="AAA"/>
    <property type="match status" value="1"/>
</dbReference>
<dbReference type="SUPFAM" id="SSF52540">
    <property type="entry name" value="P-loop containing nucleoside triphosphate hydrolases"/>
    <property type="match status" value="1"/>
</dbReference>
<dbReference type="PROSITE" id="PS00211">
    <property type="entry name" value="ABC_TRANSPORTER_1"/>
    <property type="match status" value="1"/>
</dbReference>
<dbReference type="PROSITE" id="PS50893">
    <property type="entry name" value="ABC_TRANSPORTER_2"/>
    <property type="match status" value="1"/>
</dbReference>
<dbReference type="PROSITE" id="PS51267">
    <property type="entry name" value="MACB"/>
    <property type="match status" value="1"/>
</dbReference>
<sequence length="643" mass="70008">MQKPLIELKGVSRVFNLGGLAVEVLKGIDLQIYPGEFVAIMGASGSGKSTLMNILGCLDRPSQGEYLFRGESVSLLHRDDLAQLRREEFGFIFQSYHLIHALDARENVEVPAIYAGAGIVEREKRAEELLGSLGLGERLHHRPSQLSGGQQQRVSIARALMNGGRVILADEPTGALDSRSGEEVMQLLMELSRQGHTIILITHDSHVASHANRVIEMKDGQITHRQEPVIRESNQVRSPFGVRHSSILLELFEAMKMAFRSLKMNLFRTVLTLLGIVIGVASVIVMLAIGDGAKNAVLERISAMGTNILVIRPGMPNSRGFSNIATLIPEDMEAIMELDNIIAAMPENKKSVTTRYGNNDQSTSLNATSSHFTKVRNWPLGKGVFFTEEDEKSYAKVVVLGKTVEKALFGEEDALGRFILVDNIMFQIIGVMSNRGASASGEDEDDVILVPYTTGSLHLIGQKFLRNITVAVDDLSRMGETEREIHSLLLARHGGIEDFRIRNMASLIEDVTQTQNTLTILLGSIAAISLLVGGIGVMNIMLVSVTERTKEIGIRIATGARMRHILQQFLIEAVVVSALGGLIGVVIGLGVSALIEGLGTPVYYSLMPIVWAFGCAFVTGLLFGYLPARKAARLDPVVALASE</sequence>